<comment type="function">
    <text evidence="1">Specifically methylates cytosine 38 in the anticodon loop of tRNA(Asp). Has higher activity on tRNA(Asp) modified with queuosine at position 34.</text>
</comment>
<comment type="catalytic activity">
    <reaction evidence="1">
        <text>cytidine(38) in tRNA + S-adenosyl-L-methionine = 5-methylcytidine(38) in tRNA + S-adenosyl-L-homocysteine + H(+)</text>
        <dbReference type="Rhea" id="RHEA:42956"/>
        <dbReference type="Rhea" id="RHEA-COMP:10299"/>
        <dbReference type="Rhea" id="RHEA-COMP:10300"/>
        <dbReference type="ChEBI" id="CHEBI:15378"/>
        <dbReference type="ChEBI" id="CHEBI:57856"/>
        <dbReference type="ChEBI" id="CHEBI:59789"/>
        <dbReference type="ChEBI" id="CHEBI:74483"/>
        <dbReference type="ChEBI" id="CHEBI:82748"/>
        <dbReference type="EC" id="2.1.1.204"/>
    </reaction>
    <physiologicalReaction direction="left-to-right" evidence="1">
        <dbReference type="Rhea" id="RHEA:42957"/>
    </physiologicalReaction>
</comment>
<comment type="subcellular location">
    <subcellularLocation>
        <location evidence="1">Cytoplasm</location>
    </subcellularLocation>
</comment>
<comment type="alternative products">
    <event type="alternative splicing"/>
    <isoform>
        <id>Q7YS61-1</id>
        <name>1</name>
        <sequence type="displayed"/>
    </isoform>
    <isoform>
        <id>Q7YS61-2</id>
        <name>2</name>
        <sequence type="described" ref="VSP_020573"/>
    </isoform>
</comment>
<comment type="similarity">
    <text evidence="2">Belongs to the class I-like SAM-binding methyltransferase superfamily. C5-methyltransferase family.</text>
</comment>
<dbReference type="EC" id="2.1.1.204" evidence="1"/>
<dbReference type="EMBL" id="AY244708">
    <property type="protein sequence ID" value="AAP20550.1"/>
    <property type="molecule type" value="mRNA"/>
</dbReference>
<dbReference type="EMBL" id="BT021768">
    <property type="protein sequence ID" value="AAX46615.1"/>
    <property type="molecule type" value="mRNA"/>
</dbReference>
<dbReference type="RefSeq" id="NP_861528.1">
    <molecule id="Q7YS61-1"/>
    <property type="nucleotide sequence ID" value="NM_181812.2"/>
</dbReference>
<dbReference type="SMR" id="Q7YS61"/>
<dbReference type="FunCoup" id="Q7YS61">
    <property type="interactions" value="2001"/>
</dbReference>
<dbReference type="STRING" id="9913.ENSBTAP00000027378"/>
<dbReference type="PaxDb" id="9913-ENSBTAP00000027378"/>
<dbReference type="GeneID" id="353353"/>
<dbReference type="KEGG" id="bta:353353"/>
<dbReference type="CTD" id="1787"/>
<dbReference type="VEuPathDB" id="HostDB:ENSBTAG00000020546"/>
<dbReference type="eggNOG" id="KOG0919">
    <property type="taxonomic scope" value="Eukaryota"/>
</dbReference>
<dbReference type="HOGENOM" id="CLU_049101_0_0_1"/>
<dbReference type="InParanoid" id="Q7YS61"/>
<dbReference type="OMA" id="HYAFKYA"/>
<dbReference type="OrthoDB" id="414133at2759"/>
<dbReference type="TreeFam" id="TF300024"/>
<dbReference type="Proteomes" id="UP000009136">
    <property type="component" value="Chromosome 13"/>
</dbReference>
<dbReference type="Bgee" id="ENSBTAG00000020546">
    <property type="expression patterns" value="Expressed in spermatid and 107 other cell types or tissues"/>
</dbReference>
<dbReference type="GO" id="GO:0005737">
    <property type="term" value="C:cytoplasm"/>
    <property type="evidence" value="ECO:0007669"/>
    <property type="project" value="UniProtKB-SubCell"/>
</dbReference>
<dbReference type="GO" id="GO:0005634">
    <property type="term" value="C:nucleus"/>
    <property type="evidence" value="ECO:0000318"/>
    <property type="project" value="GO_Central"/>
</dbReference>
<dbReference type="GO" id="GO:0003723">
    <property type="term" value="F:RNA binding"/>
    <property type="evidence" value="ECO:0007669"/>
    <property type="project" value="UniProtKB-KW"/>
</dbReference>
<dbReference type="GO" id="GO:0016428">
    <property type="term" value="F:tRNA (cytidine-5-)-methyltransferase activity"/>
    <property type="evidence" value="ECO:0000250"/>
    <property type="project" value="UniProtKB"/>
</dbReference>
<dbReference type="GO" id="GO:0030488">
    <property type="term" value="P:tRNA methylation"/>
    <property type="evidence" value="ECO:0000250"/>
    <property type="project" value="UniProtKB"/>
</dbReference>
<dbReference type="GO" id="GO:0036416">
    <property type="term" value="P:tRNA stabilization"/>
    <property type="evidence" value="ECO:0000250"/>
    <property type="project" value="UniProtKB"/>
</dbReference>
<dbReference type="CDD" id="cd00315">
    <property type="entry name" value="Cyt_C5_DNA_methylase"/>
    <property type="match status" value="1"/>
</dbReference>
<dbReference type="FunFam" id="3.40.50.150:FF:000285">
    <property type="entry name" value="tRNA (cytosine(38)-C(5))-methyltransferase"/>
    <property type="match status" value="1"/>
</dbReference>
<dbReference type="FunFam" id="3.90.120.10:FF:000005">
    <property type="entry name" value="tRNA (Cytosine(38)-C(5))-methyltransferase isoform X1"/>
    <property type="match status" value="1"/>
</dbReference>
<dbReference type="Gene3D" id="3.90.120.10">
    <property type="entry name" value="DNA Methylase, subunit A, domain 2"/>
    <property type="match status" value="1"/>
</dbReference>
<dbReference type="Gene3D" id="3.40.50.150">
    <property type="entry name" value="Vaccinia Virus protein VP39"/>
    <property type="match status" value="1"/>
</dbReference>
<dbReference type="InterPro" id="IPR050750">
    <property type="entry name" value="C5-MTase"/>
</dbReference>
<dbReference type="InterPro" id="IPR001525">
    <property type="entry name" value="C5_MeTfrase"/>
</dbReference>
<dbReference type="InterPro" id="IPR031303">
    <property type="entry name" value="C5_meth_CS"/>
</dbReference>
<dbReference type="InterPro" id="IPR029063">
    <property type="entry name" value="SAM-dependent_MTases_sf"/>
</dbReference>
<dbReference type="NCBIfam" id="TIGR00675">
    <property type="entry name" value="dcm"/>
    <property type="match status" value="1"/>
</dbReference>
<dbReference type="PANTHER" id="PTHR46098">
    <property type="entry name" value="TRNA (CYTOSINE(38)-C(5))-METHYLTRANSFERASE"/>
    <property type="match status" value="1"/>
</dbReference>
<dbReference type="PANTHER" id="PTHR46098:SF1">
    <property type="entry name" value="TRNA (CYTOSINE(38)-C(5))-METHYLTRANSFERASE"/>
    <property type="match status" value="1"/>
</dbReference>
<dbReference type="Pfam" id="PF00145">
    <property type="entry name" value="DNA_methylase"/>
    <property type="match status" value="1"/>
</dbReference>
<dbReference type="PRINTS" id="PR00105">
    <property type="entry name" value="C5METTRFRASE"/>
</dbReference>
<dbReference type="SUPFAM" id="SSF53335">
    <property type="entry name" value="S-adenosyl-L-methionine-dependent methyltransferases"/>
    <property type="match status" value="1"/>
</dbReference>
<dbReference type="PROSITE" id="PS00095">
    <property type="entry name" value="C5_MTASE_2"/>
    <property type="match status" value="1"/>
</dbReference>
<dbReference type="PROSITE" id="PS51679">
    <property type="entry name" value="SAM_MT_C5"/>
    <property type="match status" value="1"/>
</dbReference>
<accession>Q7YS61</accession>
<accession>Q58D29</accession>
<evidence type="ECO:0000250" key="1">
    <source>
        <dbReference type="UniProtKB" id="O14717"/>
    </source>
</evidence>
<evidence type="ECO:0000255" key="2">
    <source>
        <dbReference type="PROSITE-ProRule" id="PRU01016"/>
    </source>
</evidence>
<evidence type="ECO:0000303" key="3">
    <source>
    </source>
</evidence>
<reference key="1">
    <citation type="journal article" date="2003" name="Gene Expr. Patterns">
        <title>Analysis of DNA (cytosine 5) methyltransferase mRNA sequence and expression in bovine preimplantation embryos, fetal and adult tissues.</title>
        <authorList>
            <person name="Golding M.C."/>
            <person name="Westhusin M.E."/>
        </authorList>
    </citation>
    <scope>NUCLEOTIDE SEQUENCE [MRNA] (ISOFORM 1)</scope>
</reference>
<reference key="2">
    <citation type="journal article" date="2005" name="BMC Genomics">
        <title>Characterization of 954 bovine full-CDS cDNA sequences.</title>
        <authorList>
            <person name="Harhay G.P."/>
            <person name="Sonstegard T.S."/>
            <person name="Keele J.W."/>
            <person name="Heaton M.P."/>
            <person name="Clawson M.L."/>
            <person name="Snelling W.M."/>
            <person name="Wiedmann R.T."/>
            <person name="Van Tassell C.P."/>
            <person name="Smith T.P.L."/>
        </authorList>
    </citation>
    <scope>NUCLEOTIDE SEQUENCE [LARGE SCALE MRNA] (ISOFORM 2)</scope>
</reference>
<sequence length="391" mass="44570">MEPLRALELYSGIGGMHQALRESCIPAQVVAAVDVNTVANEVYKYNFPHTQLLAKTIEGITLEEFDRLSFNMILMSPPCQPFTRIGLQGDVTDPRTNSFLHILDILPRLQKLPKYILLENVKGFEMSSTRDLLIQTIENCGFQYQEFLLSPTSLGIPNSRLRYFLIAKLQPEPFPFQAPGQVLMEFPKTESEHPPKYAINAEKKTEEKKTGPKICFDSSTQCSGKEAILFKLETAGEIDRKHQQDSDLSVRMLKDFLEDDIDKHSFFLPPKSLLRYALLLDIVKPTSRRSMCFTKGYGRYIEGTGSVLQTTEDVQIENIYKSLTSLSQEEKIMRLSMLQLRFFTPKEIANLLGFPPEFGFPEMTTVKQRYRLLGNSLNVHVVAKLIKILCD</sequence>
<gene>
    <name type="primary">TRDMT1</name>
    <name type="synonym">DNMT2</name>
</gene>
<organism>
    <name type="scientific">Bos taurus</name>
    <name type="common">Bovine</name>
    <dbReference type="NCBI Taxonomy" id="9913"/>
    <lineage>
        <taxon>Eukaryota</taxon>
        <taxon>Metazoa</taxon>
        <taxon>Chordata</taxon>
        <taxon>Craniata</taxon>
        <taxon>Vertebrata</taxon>
        <taxon>Euteleostomi</taxon>
        <taxon>Mammalia</taxon>
        <taxon>Eutheria</taxon>
        <taxon>Laurasiatheria</taxon>
        <taxon>Artiodactyla</taxon>
        <taxon>Ruminantia</taxon>
        <taxon>Pecora</taxon>
        <taxon>Bovidae</taxon>
        <taxon>Bovinae</taxon>
        <taxon>Bos</taxon>
    </lineage>
</organism>
<protein>
    <recommendedName>
        <fullName evidence="1">tRNA (cytosine(38)-C(5))-methyltransferase</fullName>
        <ecNumber evidence="1">2.1.1.204</ecNumber>
    </recommendedName>
    <alternativeName>
        <fullName>DNA (cytosine-5)-methyltransferase-like protein 2</fullName>
        <shortName>Dnmt2</shortName>
    </alternativeName>
</protein>
<keyword id="KW-0025">Alternative splicing</keyword>
<keyword id="KW-0963">Cytoplasm</keyword>
<keyword id="KW-0489">Methyltransferase</keyword>
<keyword id="KW-1185">Reference proteome</keyword>
<keyword id="KW-0694">RNA-binding</keyword>
<keyword id="KW-0949">S-adenosyl-L-methionine</keyword>
<keyword id="KW-0808">Transferase</keyword>
<keyword id="KW-0819">tRNA processing</keyword>
<feature type="chain" id="PRO_0000247560" description="tRNA (cytosine(38)-C(5))-methyltransferase">
    <location>
        <begin position="1"/>
        <end position="391"/>
    </location>
</feature>
<feature type="domain" description="SAM-dependent MTase C5-type" evidence="2">
    <location>
        <begin position="4"/>
        <end position="391"/>
    </location>
</feature>
<feature type="active site" evidence="2">
    <location>
        <position position="79"/>
    </location>
</feature>
<feature type="binding site" evidence="1">
    <location>
        <begin position="13"/>
        <end position="15"/>
    </location>
    <ligand>
        <name>S-adenosyl-L-methionine</name>
        <dbReference type="ChEBI" id="CHEBI:59789"/>
    </ligand>
</feature>
<feature type="binding site" evidence="1">
    <location>
        <position position="34"/>
    </location>
    <ligand>
        <name>S-adenosyl-L-methionine</name>
        <dbReference type="ChEBI" id="CHEBI:59789"/>
    </ligand>
</feature>
<feature type="binding site" evidence="1">
    <location>
        <begin position="57"/>
        <end position="58"/>
    </location>
    <ligand>
        <name>S-adenosyl-L-methionine</name>
        <dbReference type="ChEBI" id="CHEBI:59789"/>
    </ligand>
</feature>
<feature type="binding site" evidence="1">
    <location>
        <position position="76"/>
    </location>
    <ligand>
        <name>S-adenosyl-L-methionine</name>
        <dbReference type="ChEBI" id="CHEBI:59789"/>
    </ligand>
</feature>
<feature type="binding site" evidence="1">
    <location>
        <position position="376"/>
    </location>
    <ligand>
        <name>S-adenosyl-L-methionine</name>
        <dbReference type="ChEBI" id="CHEBI:59789"/>
    </ligand>
</feature>
<feature type="splice variant" id="VSP_020573" description="In isoform 2." evidence="3">
    <original>FPEMTTVKQRYRLLGNSLNVHVVAKLIKILCD</original>
    <variation>MWDTRGPQLSFINGLRT</variation>
    <location>
        <begin position="360"/>
        <end position="391"/>
    </location>
</feature>
<name>TRDMT_BOVIN</name>
<proteinExistence type="evidence at transcript level"/>